<keyword id="KW-0414">Isoprene biosynthesis</keyword>
<keyword id="KW-0548">Nucleotidyltransferase</keyword>
<keyword id="KW-1185">Reference proteome</keyword>
<keyword id="KW-0808">Transferase</keyword>
<proteinExistence type="inferred from homology"/>
<sequence length="236" mass="25779">MATTHLDVCAVVPAAGFGRRMQTECPKQYLSIGNQTILEHSVHALLAHPRVKRVVIAISPGDSRFAQLPLANHPRITVVDGGEERADSVLAGLKAAGDAQWVLVHDAARPCLHQDDLARLLALSETSRTGGILAAPVRDTMKRAEPGKNAIAHTVDRNGLWHALTPQFFPRELLHDCLTRALNEGATITDEASALEYCGFHPQLVEGRADNIKVTRPEDLALAEFYLTRTIHQENT</sequence>
<gene>
    <name evidence="2" type="primary">ispD</name>
    <name type="ordered locus">c3314</name>
</gene>
<name>ISPD_ECOL6</name>
<accession>Q8FEJ5</accession>
<comment type="function">
    <text evidence="2">Catalyzes the formation of 4-diphosphocytidyl-2-C-methyl-D-erythritol from CTP and 2-C-methyl-D-erythritol 4-phosphate (MEP).</text>
</comment>
<comment type="catalytic activity">
    <reaction evidence="2">
        <text>2-C-methyl-D-erythritol 4-phosphate + CTP + H(+) = 4-CDP-2-C-methyl-D-erythritol + diphosphate</text>
        <dbReference type="Rhea" id="RHEA:13429"/>
        <dbReference type="ChEBI" id="CHEBI:15378"/>
        <dbReference type="ChEBI" id="CHEBI:33019"/>
        <dbReference type="ChEBI" id="CHEBI:37563"/>
        <dbReference type="ChEBI" id="CHEBI:57823"/>
        <dbReference type="ChEBI" id="CHEBI:58262"/>
        <dbReference type="EC" id="2.7.7.60"/>
    </reaction>
</comment>
<comment type="pathway">
    <text evidence="2">Isoprenoid biosynthesis; isopentenyl diphosphate biosynthesis via DXP pathway; isopentenyl diphosphate from 1-deoxy-D-xylulose 5-phosphate: step 2/6.</text>
</comment>
<comment type="subunit">
    <text evidence="2">Homodimer.</text>
</comment>
<comment type="similarity">
    <text evidence="2">Belongs to the IspD/TarI cytidylyltransferase family. IspD subfamily.</text>
</comment>
<reference key="1">
    <citation type="journal article" date="2002" name="Proc. Natl. Acad. Sci. U.S.A.">
        <title>Extensive mosaic structure revealed by the complete genome sequence of uropathogenic Escherichia coli.</title>
        <authorList>
            <person name="Welch R.A."/>
            <person name="Burland V."/>
            <person name="Plunkett G. III"/>
            <person name="Redford P."/>
            <person name="Roesch P."/>
            <person name="Rasko D."/>
            <person name="Buckles E.L."/>
            <person name="Liou S.-R."/>
            <person name="Boutin A."/>
            <person name="Hackett J."/>
            <person name="Stroud D."/>
            <person name="Mayhew G.F."/>
            <person name="Rose D.J."/>
            <person name="Zhou S."/>
            <person name="Schwartz D.C."/>
            <person name="Perna N.T."/>
            <person name="Mobley H.L.T."/>
            <person name="Donnenberg M.S."/>
            <person name="Blattner F.R."/>
        </authorList>
    </citation>
    <scope>NUCLEOTIDE SEQUENCE [LARGE SCALE GENOMIC DNA]</scope>
    <source>
        <strain>CFT073 / ATCC 700928 / UPEC</strain>
    </source>
</reference>
<evidence type="ECO:0000250" key="1"/>
<evidence type="ECO:0000255" key="2">
    <source>
        <dbReference type="HAMAP-Rule" id="MF_00108"/>
    </source>
</evidence>
<feature type="initiator methionine" description="Removed" evidence="1">
    <location>
        <position position="1"/>
    </location>
</feature>
<feature type="chain" id="PRO_0000075573" description="2-C-methyl-D-erythritol 4-phosphate cytidylyltransferase">
    <location>
        <begin position="2"/>
        <end position="236"/>
    </location>
</feature>
<feature type="site" description="Transition state stabilizer" evidence="2">
    <location>
        <position position="20"/>
    </location>
</feature>
<feature type="site" description="Transition state stabilizer" evidence="2">
    <location>
        <position position="27"/>
    </location>
</feature>
<feature type="site" description="Positions MEP for the nucleophilic attack" evidence="2">
    <location>
        <position position="157"/>
    </location>
</feature>
<feature type="site" description="Positions MEP for the nucleophilic attack" evidence="2">
    <location>
        <position position="213"/>
    </location>
</feature>
<protein>
    <recommendedName>
        <fullName evidence="2">2-C-methyl-D-erythritol 4-phosphate cytidylyltransferase</fullName>
        <ecNumber evidence="2">2.7.7.60</ecNumber>
    </recommendedName>
    <alternativeName>
        <fullName evidence="2">4-diphosphocytidyl-2C-methyl-D-erythritol synthase</fullName>
    </alternativeName>
    <alternativeName>
        <fullName evidence="2">MEP cytidylyltransferase</fullName>
        <shortName evidence="2">MCT</shortName>
    </alternativeName>
</protein>
<dbReference type="EC" id="2.7.7.60" evidence="2"/>
<dbReference type="EMBL" id="AE014075">
    <property type="protein sequence ID" value="AAN81763.1"/>
    <property type="molecule type" value="Genomic_DNA"/>
</dbReference>
<dbReference type="RefSeq" id="WP_000246149.1">
    <property type="nucleotide sequence ID" value="NZ_CP051263.1"/>
</dbReference>
<dbReference type="SMR" id="Q8FEJ5"/>
<dbReference type="STRING" id="199310.c3314"/>
<dbReference type="BindingDB" id="Q8FEJ5"/>
<dbReference type="ChEMBL" id="CHEMBL5245"/>
<dbReference type="KEGG" id="ecc:c3314"/>
<dbReference type="eggNOG" id="COG1211">
    <property type="taxonomic scope" value="Bacteria"/>
</dbReference>
<dbReference type="HOGENOM" id="CLU_061281_3_1_6"/>
<dbReference type="BioCyc" id="ECOL199310:C3314-MONOMER"/>
<dbReference type="SABIO-RK" id="Q8FEJ5"/>
<dbReference type="UniPathway" id="UPA00056">
    <property type="reaction ID" value="UER00093"/>
</dbReference>
<dbReference type="Proteomes" id="UP000001410">
    <property type="component" value="Chromosome"/>
</dbReference>
<dbReference type="GO" id="GO:0050518">
    <property type="term" value="F:2-C-methyl-D-erythritol 4-phosphate cytidylyltransferase activity"/>
    <property type="evidence" value="ECO:0007669"/>
    <property type="project" value="UniProtKB-UniRule"/>
</dbReference>
<dbReference type="GO" id="GO:0019288">
    <property type="term" value="P:isopentenyl diphosphate biosynthetic process, methylerythritol 4-phosphate pathway"/>
    <property type="evidence" value="ECO:0007669"/>
    <property type="project" value="UniProtKB-UniRule"/>
</dbReference>
<dbReference type="CDD" id="cd02516">
    <property type="entry name" value="CDP-ME_synthetase"/>
    <property type="match status" value="1"/>
</dbReference>
<dbReference type="FunFam" id="3.90.550.10:FF:000003">
    <property type="entry name" value="2-C-methyl-D-erythritol 4-phosphate cytidylyltransferase"/>
    <property type="match status" value="1"/>
</dbReference>
<dbReference type="Gene3D" id="3.90.550.10">
    <property type="entry name" value="Spore Coat Polysaccharide Biosynthesis Protein SpsA, Chain A"/>
    <property type="match status" value="1"/>
</dbReference>
<dbReference type="HAMAP" id="MF_00108">
    <property type="entry name" value="IspD"/>
    <property type="match status" value="1"/>
</dbReference>
<dbReference type="InterPro" id="IPR001228">
    <property type="entry name" value="IspD"/>
</dbReference>
<dbReference type="InterPro" id="IPR034683">
    <property type="entry name" value="IspD/TarI"/>
</dbReference>
<dbReference type="InterPro" id="IPR050088">
    <property type="entry name" value="IspD/TarI_cytidylyltransf_bact"/>
</dbReference>
<dbReference type="InterPro" id="IPR018294">
    <property type="entry name" value="ISPD_synthase_CS"/>
</dbReference>
<dbReference type="InterPro" id="IPR029044">
    <property type="entry name" value="Nucleotide-diphossugar_trans"/>
</dbReference>
<dbReference type="NCBIfam" id="TIGR00453">
    <property type="entry name" value="ispD"/>
    <property type="match status" value="1"/>
</dbReference>
<dbReference type="PANTHER" id="PTHR32125">
    <property type="entry name" value="2-C-METHYL-D-ERYTHRITOL 4-PHOSPHATE CYTIDYLYLTRANSFERASE, CHLOROPLASTIC"/>
    <property type="match status" value="1"/>
</dbReference>
<dbReference type="PANTHER" id="PTHR32125:SF4">
    <property type="entry name" value="2-C-METHYL-D-ERYTHRITOL 4-PHOSPHATE CYTIDYLYLTRANSFERASE, CHLOROPLASTIC"/>
    <property type="match status" value="1"/>
</dbReference>
<dbReference type="Pfam" id="PF01128">
    <property type="entry name" value="IspD"/>
    <property type="match status" value="1"/>
</dbReference>
<dbReference type="SUPFAM" id="SSF53448">
    <property type="entry name" value="Nucleotide-diphospho-sugar transferases"/>
    <property type="match status" value="1"/>
</dbReference>
<dbReference type="PROSITE" id="PS01295">
    <property type="entry name" value="ISPD"/>
    <property type="match status" value="1"/>
</dbReference>
<organism>
    <name type="scientific">Escherichia coli O6:H1 (strain CFT073 / ATCC 700928 / UPEC)</name>
    <dbReference type="NCBI Taxonomy" id="199310"/>
    <lineage>
        <taxon>Bacteria</taxon>
        <taxon>Pseudomonadati</taxon>
        <taxon>Pseudomonadota</taxon>
        <taxon>Gammaproteobacteria</taxon>
        <taxon>Enterobacterales</taxon>
        <taxon>Enterobacteriaceae</taxon>
        <taxon>Escherichia</taxon>
    </lineage>
</organism>